<comment type="function">
    <text evidence="1">Allows the formation of correctly charged Gln-tRNA(Gln) through the transamidation of misacylated Glu-tRNA(Gln) in organisms which lack glutaminyl-tRNA synthetase. The reaction takes place in the presence of glutamine and ATP through an activated gamma-phospho-Glu-tRNA(Gln).</text>
</comment>
<comment type="catalytic activity">
    <reaction evidence="1">
        <text>L-glutamyl-tRNA(Gln) + L-glutamine + ATP + H2O = L-glutaminyl-tRNA(Gln) + L-glutamate + ADP + phosphate + H(+)</text>
        <dbReference type="Rhea" id="RHEA:17521"/>
        <dbReference type="Rhea" id="RHEA-COMP:9681"/>
        <dbReference type="Rhea" id="RHEA-COMP:9684"/>
        <dbReference type="ChEBI" id="CHEBI:15377"/>
        <dbReference type="ChEBI" id="CHEBI:15378"/>
        <dbReference type="ChEBI" id="CHEBI:29985"/>
        <dbReference type="ChEBI" id="CHEBI:30616"/>
        <dbReference type="ChEBI" id="CHEBI:43474"/>
        <dbReference type="ChEBI" id="CHEBI:58359"/>
        <dbReference type="ChEBI" id="CHEBI:78520"/>
        <dbReference type="ChEBI" id="CHEBI:78521"/>
        <dbReference type="ChEBI" id="CHEBI:456216"/>
        <dbReference type="EC" id="6.3.5.7"/>
    </reaction>
</comment>
<comment type="subunit">
    <text evidence="1">Heterotrimer of A, B and C subunits.</text>
</comment>
<comment type="similarity">
    <text evidence="1">Belongs to the amidase family. GatA subfamily.</text>
</comment>
<name>GATA_NEIG2</name>
<dbReference type="EC" id="6.3.5.7" evidence="1"/>
<dbReference type="EMBL" id="CP001050">
    <property type="protein sequence ID" value="ACF29921.1"/>
    <property type="molecule type" value="Genomic_DNA"/>
</dbReference>
<dbReference type="RefSeq" id="WP_003688833.1">
    <property type="nucleotide sequence ID" value="NC_011035.1"/>
</dbReference>
<dbReference type="SMR" id="B4RM85"/>
<dbReference type="GeneID" id="66753002"/>
<dbReference type="KEGG" id="ngk:NGK_1245"/>
<dbReference type="HOGENOM" id="CLU_009600_0_3_4"/>
<dbReference type="Proteomes" id="UP000002564">
    <property type="component" value="Chromosome"/>
</dbReference>
<dbReference type="GO" id="GO:0030956">
    <property type="term" value="C:glutamyl-tRNA(Gln) amidotransferase complex"/>
    <property type="evidence" value="ECO:0007669"/>
    <property type="project" value="InterPro"/>
</dbReference>
<dbReference type="GO" id="GO:0005524">
    <property type="term" value="F:ATP binding"/>
    <property type="evidence" value="ECO:0007669"/>
    <property type="project" value="UniProtKB-KW"/>
</dbReference>
<dbReference type="GO" id="GO:0050567">
    <property type="term" value="F:glutaminyl-tRNA synthase (glutamine-hydrolyzing) activity"/>
    <property type="evidence" value="ECO:0007669"/>
    <property type="project" value="UniProtKB-UniRule"/>
</dbReference>
<dbReference type="GO" id="GO:0006412">
    <property type="term" value="P:translation"/>
    <property type="evidence" value="ECO:0007669"/>
    <property type="project" value="UniProtKB-UniRule"/>
</dbReference>
<dbReference type="Gene3D" id="3.90.1300.10">
    <property type="entry name" value="Amidase signature (AS) domain"/>
    <property type="match status" value="1"/>
</dbReference>
<dbReference type="HAMAP" id="MF_00120">
    <property type="entry name" value="GatA"/>
    <property type="match status" value="1"/>
</dbReference>
<dbReference type="InterPro" id="IPR000120">
    <property type="entry name" value="Amidase"/>
</dbReference>
<dbReference type="InterPro" id="IPR020556">
    <property type="entry name" value="Amidase_CS"/>
</dbReference>
<dbReference type="InterPro" id="IPR023631">
    <property type="entry name" value="Amidase_dom"/>
</dbReference>
<dbReference type="InterPro" id="IPR036928">
    <property type="entry name" value="AS_sf"/>
</dbReference>
<dbReference type="InterPro" id="IPR004412">
    <property type="entry name" value="GatA"/>
</dbReference>
<dbReference type="NCBIfam" id="TIGR00132">
    <property type="entry name" value="gatA"/>
    <property type="match status" value="1"/>
</dbReference>
<dbReference type="PANTHER" id="PTHR11895:SF151">
    <property type="entry name" value="GLUTAMYL-TRNA(GLN) AMIDOTRANSFERASE SUBUNIT A"/>
    <property type="match status" value="1"/>
</dbReference>
<dbReference type="PANTHER" id="PTHR11895">
    <property type="entry name" value="TRANSAMIDASE"/>
    <property type="match status" value="1"/>
</dbReference>
<dbReference type="Pfam" id="PF01425">
    <property type="entry name" value="Amidase"/>
    <property type="match status" value="1"/>
</dbReference>
<dbReference type="SUPFAM" id="SSF75304">
    <property type="entry name" value="Amidase signature (AS) enzymes"/>
    <property type="match status" value="1"/>
</dbReference>
<dbReference type="PROSITE" id="PS00571">
    <property type="entry name" value="AMIDASES"/>
    <property type="match status" value="1"/>
</dbReference>
<sequence length="481" mass="51216">MTQYTLKQAGSLLQSKQISAVELASAYLAAIAEKNPALNGYITIDQDKTLAEARAADERIAQGNASALTGVPVAYKDIFCQTGWRSACASKMLDNFVSPYTATVVQNLLDEGMVTLGRTNMDEFAMGSTNENSFYGAAKNPWNPEHVPGGSSGGSAAVVAARLAPAALGSDTGGSIRQPASHCGITGIKPTYGTVSRFGMVAYASSFDQAGPMAQTAEDCAILLNAMAGFDPKDSTSFEREKEDYTRDLDKPLKGVKIGLPKEYFSEGNSTDVQTALQNTIDLLKAQGAEPVEVSLPQTKLSIPAYYVLASAEAGTNLSRYDGVRYGHRAAQFGDLEEMYGKTRAEGFGSEVKRRIMIGTYVLSHGYYDAYYLKAQKLRRLVADDFQTAFARCDLILAPTAPSAAPKIGADTSPVETYLSDIYTIAVNLAGLPALTLPAGFSGGGLPVGVQLVGNYFAEAKILGAAHQIQLNSDWHGKRPE</sequence>
<accession>B4RM85</accession>
<keyword id="KW-0067">ATP-binding</keyword>
<keyword id="KW-0436">Ligase</keyword>
<keyword id="KW-0547">Nucleotide-binding</keyword>
<keyword id="KW-0648">Protein biosynthesis</keyword>
<feature type="chain" id="PRO_1000095154" description="Glutamyl-tRNA(Gln) amidotransferase subunit A">
    <location>
        <begin position="1"/>
        <end position="481"/>
    </location>
</feature>
<feature type="active site" description="Charge relay system" evidence="1">
    <location>
        <position position="76"/>
    </location>
</feature>
<feature type="active site" description="Charge relay system" evidence="1">
    <location>
        <position position="151"/>
    </location>
</feature>
<feature type="active site" description="Acyl-ester intermediate" evidence="1">
    <location>
        <position position="175"/>
    </location>
</feature>
<gene>
    <name evidence="1" type="primary">gatA</name>
    <name type="ordered locus">NGK_1245</name>
</gene>
<protein>
    <recommendedName>
        <fullName evidence="1">Glutamyl-tRNA(Gln) amidotransferase subunit A</fullName>
        <shortName evidence="1">Glu-ADT subunit A</shortName>
        <ecNumber evidence="1">6.3.5.7</ecNumber>
    </recommendedName>
</protein>
<proteinExistence type="inferred from homology"/>
<evidence type="ECO:0000255" key="1">
    <source>
        <dbReference type="HAMAP-Rule" id="MF_00120"/>
    </source>
</evidence>
<organism>
    <name type="scientific">Neisseria gonorrhoeae (strain NCCP11945)</name>
    <dbReference type="NCBI Taxonomy" id="521006"/>
    <lineage>
        <taxon>Bacteria</taxon>
        <taxon>Pseudomonadati</taxon>
        <taxon>Pseudomonadota</taxon>
        <taxon>Betaproteobacteria</taxon>
        <taxon>Neisseriales</taxon>
        <taxon>Neisseriaceae</taxon>
        <taxon>Neisseria</taxon>
    </lineage>
</organism>
<reference key="1">
    <citation type="journal article" date="2008" name="J. Bacteriol.">
        <title>Complete genome sequence of Neisseria gonorrhoeae NCCP11945.</title>
        <authorList>
            <person name="Chung G.T."/>
            <person name="Yoo J.S."/>
            <person name="Oh H.B."/>
            <person name="Lee Y.S."/>
            <person name="Cha S.H."/>
            <person name="Kim S.J."/>
            <person name="Yoo C.K."/>
        </authorList>
    </citation>
    <scope>NUCLEOTIDE SEQUENCE [LARGE SCALE GENOMIC DNA]</scope>
    <source>
        <strain>NCCP11945</strain>
    </source>
</reference>